<comment type="function">
    <text evidence="1">Atypical and probable non DNA-binding bHLH transcription factor that acts as a positive regulator of cell elongation and plant development. Binds the transcription repressor IBH1 and forms a heterodimer of antagonistic bHLH transcription factors that function downstream of BZR1 to mediate brassinosteroid regulation of cell elongation and lamina inclination (By similarity).</text>
</comment>
<comment type="subunit">
    <text evidence="1">Interacts with IBH1.</text>
</comment>
<comment type="similarity">
    <text>Belongs to the bHLH protein family.</text>
</comment>
<dbReference type="EMBL" id="AL442112">
    <property type="protein sequence ID" value="CAC09458.2"/>
    <property type="molecule type" value="Genomic_DNA"/>
</dbReference>
<dbReference type="EMBL" id="CM000129">
    <property type="protein sequence ID" value="EAY95757.1"/>
    <property type="molecule type" value="Genomic_DNA"/>
</dbReference>
<dbReference type="SMR" id="A2XY47"/>
<dbReference type="STRING" id="39946.A2XY47"/>
<dbReference type="EnsemblPlants" id="BGIOSGA014246-TA">
    <property type="protein sequence ID" value="BGIOSGA014246-PA"/>
    <property type="gene ID" value="BGIOSGA014246"/>
</dbReference>
<dbReference type="Gramene" id="BGIOSGA014246-TA">
    <property type="protein sequence ID" value="BGIOSGA014246-PA"/>
    <property type="gene ID" value="BGIOSGA014246"/>
</dbReference>
<dbReference type="HOGENOM" id="CLU_183267_0_0_1"/>
<dbReference type="Proteomes" id="UP000007015">
    <property type="component" value="Chromosome 4"/>
</dbReference>
<dbReference type="GO" id="GO:0046983">
    <property type="term" value="F:protein dimerization activity"/>
    <property type="evidence" value="ECO:0007669"/>
    <property type="project" value="InterPro"/>
</dbReference>
<dbReference type="GO" id="GO:0006355">
    <property type="term" value="P:regulation of DNA-templated transcription"/>
    <property type="evidence" value="ECO:0007669"/>
    <property type="project" value="InterPro"/>
</dbReference>
<dbReference type="GO" id="GO:0040008">
    <property type="term" value="P:regulation of growth"/>
    <property type="evidence" value="ECO:0007669"/>
    <property type="project" value="InterPro"/>
</dbReference>
<dbReference type="GO" id="GO:0009741">
    <property type="term" value="P:response to brassinosteroid"/>
    <property type="evidence" value="ECO:0007669"/>
    <property type="project" value="EnsemblPlants"/>
</dbReference>
<dbReference type="GO" id="GO:0009826">
    <property type="term" value="P:unidimensional cell growth"/>
    <property type="evidence" value="ECO:0007669"/>
    <property type="project" value="EnsemblPlants"/>
</dbReference>
<dbReference type="FunFam" id="4.10.280.10:FF:000113">
    <property type="entry name" value="Transcription factor ILI1"/>
    <property type="match status" value="1"/>
</dbReference>
<dbReference type="Gene3D" id="4.10.280.10">
    <property type="entry name" value="Helix-loop-helix DNA-binding domain"/>
    <property type="match status" value="1"/>
</dbReference>
<dbReference type="InterPro" id="IPR011598">
    <property type="entry name" value="bHLH_dom"/>
</dbReference>
<dbReference type="InterPro" id="IPR036638">
    <property type="entry name" value="HLH_DNA-bd_sf"/>
</dbReference>
<dbReference type="InterPro" id="IPR044293">
    <property type="entry name" value="PRE"/>
</dbReference>
<dbReference type="PANTHER" id="PTHR46446:SF25">
    <property type="entry name" value="TRANSCRIPTION FACTOR ILI1"/>
    <property type="match status" value="1"/>
</dbReference>
<dbReference type="PANTHER" id="PTHR46446">
    <property type="entry name" value="TRANSCRIPTION FACTOR PRE"/>
    <property type="match status" value="1"/>
</dbReference>
<dbReference type="Pfam" id="PF23174">
    <property type="entry name" value="bHLH_ILI"/>
    <property type="match status" value="1"/>
</dbReference>
<dbReference type="SUPFAM" id="SSF47459">
    <property type="entry name" value="HLH, helix-loop-helix DNA-binding domain"/>
    <property type="match status" value="1"/>
</dbReference>
<dbReference type="PROSITE" id="PS50888">
    <property type="entry name" value="BHLH"/>
    <property type="match status" value="1"/>
</dbReference>
<sequence>MSSSRRSRSRRAGSSVPSSSSSSRTSISEDQIAELLSKLQALLPESQARNGAHRGSAARVLQETCSYIRSLHQEVDNLSETLAQLLASPDVTSDQAAVIRSLLM</sequence>
<gene>
    <name type="primary">ILI1</name>
    <name type="synonym">BHLH154</name>
    <name type="ORF">H0423H10.4</name>
    <name type="ORF">OsI_17632</name>
</gene>
<keyword id="KW-0341">Growth regulation</keyword>
<keyword id="KW-1185">Reference proteome</keyword>
<keyword id="KW-0804">Transcription</keyword>
<keyword id="KW-0805">Transcription regulation</keyword>
<proteinExistence type="inferred from homology"/>
<reference key="1">
    <citation type="journal article" date="2002" name="Nature">
        <title>Sequence and analysis of rice chromosome 4.</title>
        <authorList>
            <person name="Feng Q."/>
            <person name="Zhang Y."/>
            <person name="Hao P."/>
            <person name="Wang S."/>
            <person name="Fu G."/>
            <person name="Huang Y."/>
            <person name="Li Y."/>
            <person name="Zhu J."/>
            <person name="Liu Y."/>
            <person name="Hu X."/>
            <person name="Jia P."/>
            <person name="Zhang Y."/>
            <person name="Zhao Q."/>
            <person name="Ying K."/>
            <person name="Yu S."/>
            <person name="Tang Y."/>
            <person name="Weng Q."/>
            <person name="Zhang L."/>
            <person name="Lu Y."/>
            <person name="Mu J."/>
            <person name="Lu Y."/>
            <person name="Zhang L.S."/>
            <person name="Yu Z."/>
            <person name="Fan D."/>
            <person name="Liu X."/>
            <person name="Lu T."/>
            <person name="Li C."/>
            <person name="Wu Y."/>
            <person name="Sun T."/>
            <person name="Lei H."/>
            <person name="Li T."/>
            <person name="Hu H."/>
            <person name="Guan J."/>
            <person name="Wu M."/>
            <person name="Zhang R."/>
            <person name="Zhou B."/>
            <person name="Chen Z."/>
            <person name="Chen L."/>
            <person name="Jin Z."/>
            <person name="Wang R."/>
            <person name="Yin H."/>
            <person name="Cai Z."/>
            <person name="Ren S."/>
            <person name="Lv G."/>
            <person name="Gu W."/>
            <person name="Zhu G."/>
            <person name="Tu Y."/>
            <person name="Jia J."/>
            <person name="Zhang Y."/>
            <person name="Chen J."/>
            <person name="Kang H."/>
            <person name="Chen X."/>
            <person name="Shao C."/>
            <person name="Sun Y."/>
            <person name="Hu Q."/>
            <person name="Zhang X."/>
            <person name="Zhang W."/>
            <person name="Wang L."/>
            <person name="Ding C."/>
            <person name="Sheng H."/>
            <person name="Gu J."/>
            <person name="Chen S."/>
            <person name="Ni L."/>
            <person name="Zhu F."/>
            <person name="Chen W."/>
            <person name="Lan L."/>
            <person name="Lai Y."/>
            <person name="Cheng Z."/>
            <person name="Gu M."/>
            <person name="Jiang J."/>
            <person name="Li J."/>
            <person name="Hong G."/>
            <person name="Xue Y."/>
            <person name="Han B."/>
        </authorList>
    </citation>
    <scope>NUCLEOTIDE SEQUENCE [LARGE SCALE GENOMIC DNA]</scope>
    <source>
        <strain>cv. Guang-Lu-Ai No.4</strain>
    </source>
</reference>
<reference key="2">
    <citation type="journal article" date="2005" name="PLoS Biol.">
        <title>The genomes of Oryza sativa: a history of duplications.</title>
        <authorList>
            <person name="Yu J."/>
            <person name="Wang J."/>
            <person name="Lin W."/>
            <person name="Li S."/>
            <person name="Li H."/>
            <person name="Zhou J."/>
            <person name="Ni P."/>
            <person name="Dong W."/>
            <person name="Hu S."/>
            <person name="Zeng C."/>
            <person name="Zhang J."/>
            <person name="Zhang Y."/>
            <person name="Li R."/>
            <person name="Xu Z."/>
            <person name="Li S."/>
            <person name="Li X."/>
            <person name="Zheng H."/>
            <person name="Cong L."/>
            <person name="Lin L."/>
            <person name="Yin J."/>
            <person name="Geng J."/>
            <person name="Li G."/>
            <person name="Shi J."/>
            <person name="Liu J."/>
            <person name="Lv H."/>
            <person name="Li J."/>
            <person name="Wang J."/>
            <person name="Deng Y."/>
            <person name="Ran L."/>
            <person name="Shi X."/>
            <person name="Wang X."/>
            <person name="Wu Q."/>
            <person name="Li C."/>
            <person name="Ren X."/>
            <person name="Wang J."/>
            <person name="Wang X."/>
            <person name="Li D."/>
            <person name="Liu D."/>
            <person name="Zhang X."/>
            <person name="Ji Z."/>
            <person name="Zhao W."/>
            <person name="Sun Y."/>
            <person name="Zhang Z."/>
            <person name="Bao J."/>
            <person name="Han Y."/>
            <person name="Dong L."/>
            <person name="Ji J."/>
            <person name="Chen P."/>
            <person name="Wu S."/>
            <person name="Liu J."/>
            <person name="Xiao Y."/>
            <person name="Bu D."/>
            <person name="Tan J."/>
            <person name="Yang L."/>
            <person name="Ye C."/>
            <person name="Zhang J."/>
            <person name="Xu J."/>
            <person name="Zhou Y."/>
            <person name="Yu Y."/>
            <person name="Zhang B."/>
            <person name="Zhuang S."/>
            <person name="Wei H."/>
            <person name="Liu B."/>
            <person name="Lei M."/>
            <person name="Yu H."/>
            <person name="Li Y."/>
            <person name="Xu H."/>
            <person name="Wei S."/>
            <person name="He X."/>
            <person name="Fang L."/>
            <person name="Zhang Z."/>
            <person name="Zhang Y."/>
            <person name="Huang X."/>
            <person name="Su Z."/>
            <person name="Tong W."/>
            <person name="Li J."/>
            <person name="Tong Z."/>
            <person name="Li S."/>
            <person name="Ye J."/>
            <person name="Wang L."/>
            <person name="Fang L."/>
            <person name="Lei T."/>
            <person name="Chen C.-S."/>
            <person name="Chen H.-C."/>
            <person name="Xu Z."/>
            <person name="Li H."/>
            <person name="Huang H."/>
            <person name="Zhang F."/>
            <person name="Xu H."/>
            <person name="Li N."/>
            <person name="Zhao C."/>
            <person name="Li S."/>
            <person name="Dong L."/>
            <person name="Huang Y."/>
            <person name="Li L."/>
            <person name="Xi Y."/>
            <person name="Qi Q."/>
            <person name="Li W."/>
            <person name="Zhang B."/>
            <person name="Hu W."/>
            <person name="Zhang Y."/>
            <person name="Tian X."/>
            <person name="Jiao Y."/>
            <person name="Liang X."/>
            <person name="Jin J."/>
            <person name="Gao L."/>
            <person name="Zheng W."/>
            <person name="Hao B."/>
            <person name="Liu S.-M."/>
            <person name="Wang W."/>
            <person name="Yuan L."/>
            <person name="Cao M."/>
            <person name="McDermott J."/>
            <person name="Samudrala R."/>
            <person name="Wang J."/>
            <person name="Wong G.K.-S."/>
            <person name="Yang H."/>
        </authorList>
    </citation>
    <scope>NUCLEOTIDE SEQUENCE [LARGE SCALE GENOMIC DNA]</scope>
    <source>
        <strain>cv. 93-11</strain>
    </source>
</reference>
<feature type="chain" id="PRO_0000429089" description="Transcription factor ILI1">
    <location>
        <begin position="1"/>
        <end position="104"/>
    </location>
</feature>
<feature type="domain" description="bHLH" evidence="2">
    <location>
        <begin position="16"/>
        <end position="71"/>
    </location>
</feature>
<feature type="region of interest" description="Disordered" evidence="3">
    <location>
        <begin position="1"/>
        <end position="27"/>
    </location>
</feature>
<feature type="compositionally biased region" description="Basic residues" evidence="3">
    <location>
        <begin position="1"/>
        <end position="11"/>
    </location>
</feature>
<feature type="compositionally biased region" description="Low complexity" evidence="3">
    <location>
        <begin position="12"/>
        <end position="27"/>
    </location>
</feature>
<organism>
    <name type="scientific">Oryza sativa subsp. indica</name>
    <name type="common">Rice</name>
    <dbReference type="NCBI Taxonomy" id="39946"/>
    <lineage>
        <taxon>Eukaryota</taxon>
        <taxon>Viridiplantae</taxon>
        <taxon>Streptophyta</taxon>
        <taxon>Embryophyta</taxon>
        <taxon>Tracheophyta</taxon>
        <taxon>Spermatophyta</taxon>
        <taxon>Magnoliopsida</taxon>
        <taxon>Liliopsida</taxon>
        <taxon>Poales</taxon>
        <taxon>Poaceae</taxon>
        <taxon>BOP clade</taxon>
        <taxon>Oryzoideae</taxon>
        <taxon>Oryzeae</taxon>
        <taxon>Oryzinae</taxon>
        <taxon>Oryza</taxon>
        <taxon>Oryza sativa</taxon>
    </lineage>
</organism>
<accession>A2XY47</accession>
<accession>Q9FSQ9</accession>
<evidence type="ECO:0000250" key="1"/>
<evidence type="ECO:0000255" key="2">
    <source>
        <dbReference type="PROSITE-ProRule" id="PRU00981"/>
    </source>
</evidence>
<evidence type="ECO:0000256" key="3">
    <source>
        <dbReference type="SAM" id="MobiDB-lite"/>
    </source>
</evidence>
<name>ILI1_ORYSI</name>
<protein>
    <recommendedName>
        <fullName>Transcription factor ILI1</fullName>
    </recommendedName>
    <alternativeName>
        <fullName>Basic helix-loop-helix protein 154</fullName>
    </alternativeName>
    <alternativeName>
        <fullName>Protein INCREASED LEAF INCLINATION 1</fullName>
    </alternativeName>
    <alternativeName>
        <fullName>bHLH transcription factor bHLH154</fullName>
    </alternativeName>
</protein>